<organism>
    <name type="scientific">Shigella boydii serotype 4 (strain Sb227)</name>
    <dbReference type="NCBI Taxonomy" id="300268"/>
    <lineage>
        <taxon>Bacteria</taxon>
        <taxon>Pseudomonadati</taxon>
        <taxon>Pseudomonadota</taxon>
        <taxon>Gammaproteobacteria</taxon>
        <taxon>Enterobacterales</taxon>
        <taxon>Enterobacteriaceae</taxon>
        <taxon>Shigella</taxon>
    </lineage>
</organism>
<feature type="chain" id="PRO_0000230327" description="Ascorbate-specific PTS system EIIB component">
    <location>
        <begin position="1"/>
        <end position="101"/>
    </location>
</feature>
<feature type="domain" description="PTS EIIB type-2" evidence="3">
    <location>
        <begin position="3"/>
        <end position="96"/>
    </location>
</feature>
<feature type="active site" description="Phosphocysteine intermediate" evidence="1 4">
    <location>
        <position position="9"/>
    </location>
</feature>
<feature type="modified residue" description="Phosphocysteine" evidence="1 4">
    <location>
        <position position="9"/>
    </location>
</feature>
<gene>
    <name type="primary">ulaB</name>
    <name type="ordered locus">SBO_4261</name>
</gene>
<proteinExistence type="inferred from homology"/>
<dbReference type="EC" id="2.7.1.194" evidence="2"/>
<dbReference type="EMBL" id="CP000036">
    <property type="protein sequence ID" value="ABB68683.1"/>
    <property type="molecule type" value="Genomic_DNA"/>
</dbReference>
<dbReference type="RefSeq" id="WP_000218360.1">
    <property type="nucleotide sequence ID" value="NC_007613.1"/>
</dbReference>
<dbReference type="SMR" id="Q31TC5"/>
<dbReference type="KEGG" id="sbo:SBO_4261"/>
<dbReference type="HOGENOM" id="CLU_159248_0_0_6"/>
<dbReference type="Proteomes" id="UP000007067">
    <property type="component" value="Chromosome"/>
</dbReference>
<dbReference type="GO" id="GO:0005737">
    <property type="term" value="C:cytoplasm"/>
    <property type="evidence" value="ECO:0007669"/>
    <property type="project" value="UniProtKB-SubCell"/>
</dbReference>
<dbReference type="GO" id="GO:0016301">
    <property type="term" value="F:kinase activity"/>
    <property type="evidence" value="ECO:0007669"/>
    <property type="project" value="UniProtKB-KW"/>
</dbReference>
<dbReference type="GO" id="GO:0008982">
    <property type="term" value="F:protein-N(PI)-phosphohistidine-sugar phosphotransferase activity"/>
    <property type="evidence" value="ECO:0007669"/>
    <property type="project" value="InterPro"/>
</dbReference>
<dbReference type="GO" id="GO:0009401">
    <property type="term" value="P:phosphoenolpyruvate-dependent sugar phosphotransferase system"/>
    <property type="evidence" value="ECO:0007669"/>
    <property type="project" value="UniProtKB-KW"/>
</dbReference>
<dbReference type="CDD" id="cd05563">
    <property type="entry name" value="PTS_IIB_ascorbate"/>
    <property type="match status" value="1"/>
</dbReference>
<dbReference type="FunFam" id="3.40.50.2300:FF:000030">
    <property type="entry name" value="PTS system, ascorbate-specific, IIB component"/>
    <property type="match status" value="1"/>
</dbReference>
<dbReference type="Gene3D" id="3.40.50.2300">
    <property type="match status" value="1"/>
</dbReference>
<dbReference type="InterPro" id="IPR036095">
    <property type="entry name" value="PTS_EIIB-like_sf"/>
</dbReference>
<dbReference type="InterPro" id="IPR013011">
    <property type="entry name" value="PTS_EIIB_2"/>
</dbReference>
<dbReference type="InterPro" id="IPR003501">
    <property type="entry name" value="PTS_EIIB_2/3"/>
</dbReference>
<dbReference type="NCBIfam" id="NF007586">
    <property type="entry name" value="PRK10222.1"/>
    <property type="match status" value="1"/>
</dbReference>
<dbReference type="Pfam" id="PF02302">
    <property type="entry name" value="PTS_IIB"/>
    <property type="match status" value="1"/>
</dbReference>
<dbReference type="SUPFAM" id="SSF52794">
    <property type="entry name" value="PTS system IIB component-like"/>
    <property type="match status" value="1"/>
</dbReference>
<dbReference type="PROSITE" id="PS51099">
    <property type="entry name" value="PTS_EIIB_TYPE_2"/>
    <property type="match status" value="1"/>
</dbReference>
<keyword id="KW-0963">Cytoplasm</keyword>
<keyword id="KW-0418">Kinase</keyword>
<keyword id="KW-0597">Phosphoprotein</keyword>
<keyword id="KW-0598">Phosphotransferase system</keyword>
<keyword id="KW-0808">Transferase</keyword>
<keyword id="KW-0813">Transport</keyword>
<comment type="function">
    <text evidence="2">The phosphoenolpyruvate-dependent sugar phosphotransferase system (sugar PTS), a major carbohydrate active transport system, catalyzes the phosphorylation of incoming sugar substrates concomitantly with their translocation across the cell membrane. The enzyme II UlaABC PTS system is involved in ascorbate transport.</text>
</comment>
<comment type="catalytic activity">
    <reaction evidence="2">
        <text>N(pros)-phospho-L-histidyl-[protein] + L-ascorbate(out) = L-ascorbate 6-phosphate(in) + L-histidyl-[protein]</text>
        <dbReference type="Rhea" id="RHEA:42436"/>
        <dbReference type="Rhea" id="RHEA-COMP:9745"/>
        <dbReference type="Rhea" id="RHEA-COMP:9746"/>
        <dbReference type="ChEBI" id="CHEBI:29979"/>
        <dbReference type="ChEBI" id="CHEBI:38290"/>
        <dbReference type="ChEBI" id="CHEBI:61698"/>
        <dbReference type="ChEBI" id="CHEBI:64837"/>
        <dbReference type="EC" id="2.7.1.194"/>
    </reaction>
</comment>
<comment type="subcellular location">
    <subcellularLocation>
        <location evidence="4">Cytoplasm</location>
    </subcellularLocation>
</comment>
<comment type="induction">
    <text evidence="2">Induced by L-ascorbate. Repressed by UlaR.</text>
</comment>
<comment type="domain">
    <text evidence="3">The PTS EIIB type-2 domain is phosphorylated by phospho-EIIA on a cysteinyl residue. Then, it transfers the phosphoryl group to the sugar substrate concomitantly with the sugar uptake processed by the PTS EIIC type-2 domain.</text>
</comment>
<evidence type="ECO:0000250" key="1">
    <source>
        <dbReference type="UniProtKB" id="P00550"/>
    </source>
</evidence>
<evidence type="ECO:0000250" key="2">
    <source>
        <dbReference type="UniProtKB" id="P69822"/>
    </source>
</evidence>
<evidence type="ECO:0000255" key="3">
    <source>
        <dbReference type="PROSITE-ProRule" id="PRU00422"/>
    </source>
</evidence>
<evidence type="ECO:0000305" key="4"/>
<protein>
    <recommendedName>
        <fullName evidence="2">Ascorbate-specific PTS system EIIB component</fullName>
        <ecNumber evidence="2">2.7.1.194</ecNumber>
    </recommendedName>
    <alternativeName>
        <fullName evidence="2">Ascorbate-specific phosphotransferase enzyme IIB component</fullName>
    </alternativeName>
</protein>
<name>ULAB_SHIBS</name>
<accession>Q31TC5</accession>
<sequence length="101" mass="10838">MTVRILAVCGNGQGSSMIMKMKVDQFLTQSNIDHTVNSCAVGEYKSELSGADIIIASTHIAGEITVTGNKYVVGVRNMLSPADFGPKLLEVIKAHFPQDVK</sequence>
<reference key="1">
    <citation type="journal article" date="2005" name="Nucleic Acids Res.">
        <title>Genome dynamics and diversity of Shigella species, the etiologic agents of bacillary dysentery.</title>
        <authorList>
            <person name="Yang F."/>
            <person name="Yang J."/>
            <person name="Zhang X."/>
            <person name="Chen L."/>
            <person name="Jiang Y."/>
            <person name="Yan Y."/>
            <person name="Tang X."/>
            <person name="Wang J."/>
            <person name="Xiong Z."/>
            <person name="Dong J."/>
            <person name="Xue Y."/>
            <person name="Zhu Y."/>
            <person name="Xu X."/>
            <person name="Sun L."/>
            <person name="Chen S."/>
            <person name="Nie H."/>
            <person name="Peng J."/>
            <person name="Xu J."/>
            <person name="Wang Y."/>
            <person name="Yuan Z."/>
            <person name="Wen Y."/>
            <person name="Yao Z."/>
            <person name="Shen Y."/>
            <person name="Qiang B."/>
            <person name="Hou Y."/>
            <person name="Yu J."/>
            <person name="Jin Q."/>
        </authorList>
    </citation>
    <scope>NUCLEOTIDE SEQUENCE [LARGE SCALE GENOMIC DNA]</scope>
    <source>
        <strain>Sb227</strain>
    </source>
</reference>